<organism>
    <name type="scientific">Roseobacter denitrificans (strain ATCC 33942 / OCh 114)</name>
    <name type="common">Erythrobacter sp. (strain OCh 114)</name>
    <name type="synonym">Roseobacter denitrificans</name>
    <dbReference type="NCBI Taxonomy" id="375451"/>
    <lineage>
        <taxon>Bacteria</taxon>
        <taxon>Pseudomonadati</taxon>
        <taxon>Pseudomonadota</taxon>
        <taxon>Alphaproteobacteria</taxon>
        <taxon>Rhodobacterales</taxon>
        <taxon>Roseobacteraceae</taxon>
        <taxon>Roseobacter</taxon>
    </lineage>
</organism>
<evidence type="ECO:0000255" key="1">
    <source>
        <dbReference type="HAMAP-Rule" id="MF_00739"/>
    </source>
</evidence>
<name>URE3_ROSDO</name>
<proteinExistence type="inferred from homology"/>
<sequence length="100" mass="10960">MQLTPREKDKLLISMAAEVARKRLARGVKLNHPEAIALITDAVVEGARDGRSVADMMEAGAQVITRDQCMEGVPEMIHDVQVEATFPDGTKLVTVHNPIR</sequence>
<keyword id="KW-0963">Cytoplasm</keyword>
<keyword id="KW-0378">Hydrolase</keyword>
<keyword id="KW-1185">Reference proteome</keyword>
<comment type="catalytic activity">
    <reaction evidence="1">
        <text>urea + 2 H2O + H(+) = hydrogencarbonate + 2 NH4(+)</text>
        <dbReference type="Rhea" id="RHEA:20557"/>
        <dbReference type="ChEBI" id="CHEBI:15377"/>
        <dbReference type="ChEBI" id="CHEBI:15378"/>
        <dbReference type="ChEBI" id="CHEBI:16199"/>
        <dbReference type="ChEBI" id="CHEBI:17544"/>
        <dbReference type="ChEBI" id="CHEBI:28938"/>
        <dbReference type="EC" id="3.5.1.5"/>
    </reaction>
</comment>
<comment type="pathway">
    <text evidence="1">Nitrogen metabolism; urea degradation; CO(2) and NH(3) from urea (urease route): step 1/1.</text>
</comment>
<comment type="subunit">
    <text evidence="1">Heterotrimer of UreA (gamma), UreB (beta) and UreC (alpha) subunits. Three heterotrimers associate to form the active enzyme.</text>
</comment>
<comment type="subcellular location">
    <subcellularLocation>
        <location evidence="1">Cytoplasm</location>
    </subcellularLocation>
</comment>
<comment type="similarity">
    <text evidence="1">Belongs to the urease gamma subunit family.</text>
</comment>
<accession>Q161T2</accession>
<reference key="1">
    <citation type="journal article" date="2007" name="J. Bacteriol.">
        <title>The complete genome sequence of Roseobacter denitrificans reveals a mixotrophic rather than photosynthetic metabolism.</title>
        <authorList>
            <person name="Swingley W.D."/>
            <person name="Sadekar S."/>
            <person name="Mastrian S.D."/>
            <person name="Matthies H.J."/>
            <person name="Hao J."/>
            <person name="Ramos H."/>
            <person name="Acharya C.R."/>
            <person name="Conrad A.L."/>
            <person name="Taylor H.L."/>
            <person name="Dejesa L.C."/>
            <person name="Shah M.K."/>
            <person name="O'Huallachain M.E."/>
            <person name="Lince M.T."/>
            <person name="Blankenship R.E."/>
            <person name="Beatty J.T."/>
            <person name="Touchman J.W."/>
        </authorList>
    </citation>
    <scope>NUCLEOTIDE SEQUENCE [LARGE SCALE GENOMIC DNA]</scope>
    <source>
        <strain>ATCC 33942 / OCh 114</strain>
    </source>
</reference>
<protein>
    <recommendedName>
        <fullName evidence="1">Urease subunit gamma</fullName>
        <ecNumber evidence="1">3.5.1.5</ecNumber>
    </recommendedName>
    <alternativeName>
        <fullName evidence="1">Urea amidohydrolase subunit gamma</fullName>
    </alternativeName>
</protein>
<gene>
    <name evidence="1" type="primary">ureA</name>
    <name type="ordered locus">RD1_3793</name>
</gene>
<feature type="chain" id="PRO_1000046366" description="Urease subunit gamma">
    <location>
        <begin position="1"/>
        <end position="100"/>
    </location>
</feature>
<dbReference type="EC" id="3.5.1.5" evidence="1"/>
<dbReference type="EMBL" id="CP000362">
    <property type="protein sequence ID" value="ABG33261.1"/>
    <property type="molecule type" value="Genomic_DNA"/>
</dbReference>
<dbReference type="RefSeq" id="WP_011569872.1">
    <property type="nucleotide sequence ID" value="NC_008209.1"/>
</dbReference>
<dbReference type="SMR" id="Q161T2"/>
<dbReference type="STRING" id="375451.RD1_3793"/>
<dbReference type="KEGG" id="rde:RD1_3793"/>
<dbReference type="eggNOG" id="COG0831">
    <property type="taxonomic scope" value="Bacteria"/>
</dbReference>
<dbReference type="HOGENOM" id="CLU_145825_1_0_5"/>
<dbReference type="OrthoDB" id="9797217at2"/>
<dbReference type="UniPathway" id="UPA00258">
    <property type="reaction ID" value="UER00370"/>
</dbReference>
<dbReference type="Proteomes" id="UP000007029">
    <property type="component" value="Chromosome"/>
</dbReference>
<dbReference type="GO" id="GO:0005737">
    <property type="term" value="C:cytoplasm"/>
    <property type="evidence" value="ECO:0007669"/>
    <property type="project" value="UniProtKB-SubCell"/>
</dbReference>
<dbReference type="GO" id="GO:0016151">
    <property type="term" value="F:nickel cation binding"/>
    <property type="evidence" value="ECO:0007669"/>
    <property type="project" value="InterPro"/>
</dbReference>
<dbReference type="GO" id="GO:0009039">
    <property type="term" value="F:urease activity"/>
    <property type="evidence" value="ECO:0007669"/>
    <property type="project" value="UniProtKB-UniRule"/>
</dbReference>
<dbReference type="GO" id="GO:0043419">
    <property type="term" value="P:urea catabolic process"/>
    <property type="evidence" value="ECO:0007669"/>
    <property type="project" value="UniProtKB-UniRule"/>
</dbReference>
<dbReference type="CDD" id="cd00390">
    <property type="entry name" value="Urease_gamma"/>
    <property type="match status" value="1"/>
</dbReference>
<dbReference type="Gene3D" id="3.30.280.10">
    <property type="entry name" value="Urease, gamma-like subunit"/>
    <property type="match status" value="1"/>
</dbReference>
<dbReference type="HAMAP" id="MF_00739">
    <property type="entry name" value="Urease_gamma"/>
    <property type="match status" value="1"/>
</dbReference>
<dbReference type="InterPro" id="IPR012010">
    <property type="entry name" value="Urease_gamma"/>
</dbReference>
<dbReference type="InterPro" id="IPR002026">
    <property type="entry name" value="Urease_gamma/gamma-beta_su"/>
</dbReference>
<dbReference type="InterPro" id="IPR036463">
    <property type="entry name" value="Urease_gamma_sf"/>
</dbReference>
<dbReference type="InterPro" id="IPR050069">
    <property type="entry name" value="Urease_subunit"/>
</dbReference>
<dbReference type="NCBIfam" id="NF009712">
    <property type="entry name" value="PRK13241.1"/>
    <property type="match status" value="1"/>
</dbReference>
<dbReference type="NCBIfam" id="TIGR00193">
    <property type="entry name" value="urease_gam"/>
    <property type="match status" value="1"/>
</dbReference>
<dbReference type="PANTHER" id="PTHR33569">
    <property type="entry name" value="UREASE"/>
    <property type="match status" value="1"/>
</dbReference>
<dbReference type="PANTHER" id="PTHR33569:SF1">
    <property type="entry name" value="UREASE"/>
    <property type="match status" value="1"/>
</dbReference>
<dbReference type="Pfam" id="PF00547">
    <property type="entry name" value="Urease_gamma"/>
    <property type="match status" value="1"/>
</dbReference>
<dbReference type="PIRSF" id="PIRSF001223">
    <property type="entry name" value="Urease_gamma"/>
    <property type="match status" value="1"/>
</dbReference>
<dbReference type="SUPFAM" id="SSF54111">
    <property type="entry name" value="Urease, gamma-subunit"/>
    <property type="match status" value="1"/>
</dbReference>